<name>HDHA_BACFN</name>
<comment type="function">
    <text evidence="2 3">7alpha-hydroxysteroid dehydrogenase involved in the metabolism of bile acids in the gut. Catalyzes the NAD(+)-dependent oxidation of the 7alpha-hydroxy group of 7alpha-hydroxysteroids, such as cholate, chenodeoxycholate, taurochenodeoxycholate, glycochenodeoxycholate, taurocholate and glycocholate, to the corresponding 7-oxosteroids (PubMed:14756531). Since it is also able to catalyze the reduction of nonsteroidal carbonyl compounds such as various benzaldehyde analogs to their corresponding benzyl alcohols, this enzyme may also function in the detoxification of xenobiotics containing carbonyl groups in the large intestine (PubMed:21600233).</text>
</comment>
<comment type="catalytic activity">
    <reaction evidence="2">
        <text>cholate + NAD(+) = 3alpha,12alpha-dihydroxy-7-oxo-5beta-cholanate + NADH + H(+)</text>
        <dbReference type="Rhea" id="RHEA:19409"/>
        <dbReference type="ChEBI" id="CHEBI:11893"/>
        <dbReference type="ChEBI" id="CHEBI:15378"/>
        <dbReference type="ChEBI" id="CHEBI:29747"/>
        <dbReference type="ChEBI" id="CHEBI:57540"/>
        <dbReference type="ChEBI" id="CHEBI:57945"/>
        <dbReference type="EC" id="1.1.1.159"/>
    </reaction>
    <physiologicalReaction direction="left-to-right" evidence="6">
        <dbReference type="Rhea" id="RHEA:19410"/>
    </physiologicalReaction>
</comment>
<comment type="catalytic activity">
    <reaction evidence="2">
        <text>chenodeoxycholate + NAD(+) = 7-oxolithocholate + NADH + H(+)</text>
        <dbReference type="Rhea" id="RHEA:42036"/>
        <dbReference type="ChEBI" id="CHEBI:15378"/>
        <dbReference type="ChEBI" id="CHEBI:36234"/>
        <dbReference type="ChEBI" id="CHEBI:57540"/>
        <dbReference type="ChEBI" id="CHEBI:57945"/>
        <dbReference type="ChEBI" id="CHEBI:78605"/>
    </reaction>
    <physiologicalReaction direction="left-to-right" evidence="6">
        <dbReference type="Rhea" id="RHEA:42037"/>
    </physiologicalReaction>
</comment>
<comment type="catalytic activity">
    <reaction evidence="2">
        <text>taurochenodeoxycholate + NAD(+) = 7-oxotaurolithocholate + NADH + H(+)</text>
        <dbReference type="Rhea" id="RHEA:53824"/>
        <dbReference type="ChEBI" id="CHEBI:9407"/>
        <dbReference type="ChEBI" id="CHEBI:15378"/>
        <dbReference type="ChEBI" id="CHEBI:57540"/>
        <dbReference type="ChEBI" id="CHEBI:57945"/>
        <dbReference type="ChEBI" id="CHEBI:137724"/>
    </reaction>
    <physiologicalReaction direction="left-to-right" evidence="6">
        <dbReference type="Rhea" id="RHEA:53825"/>
    </physiologicalReaction>
</comment>
<comment type="catalytic activity">
    <reaction evidence="2">
        <text>glycochenodeoxycholate + NAD(+) = 7-oxoglycolithocholate + NADH + H(+)</text>
        <dbReference type="Rhea" id="RHEA:53844"/>
        <dbReference type="ChEBI" id="CHEBI:15378"/>
        <dbReference type="ChEBI" id="CHEBI:36252"/>
        <dbReference type="ChEBI" id="CHEBI:57540"/>
        <dbReference type="ChEBI" id="CHEBI:57945"/>
        <dbReference type="ChEBI" id="CHEBI:137818"/>
    </reaction>
    <physiologicalReaction direction="left-to-right" evidence="6">
        <dbReference type="Rhea" id="RHEA:53845"/>
    </physiologicalReaction>
</comment>
<comment type="catalytic activity">
    <reaction evidence="2">
        <text>taurocholate + NAD(+) = 7-oxo-taurodeoxycholate + NADH + H(+)</text>
        <dbReference type="Rhea" id="RHEA:53848"/>
        <dbReference type="ChEBI" id="CHEBI:15378"/>
        <dbReference type="ChEBI" id="CHEBI:36257"/>
        <dbReference type="ChEBI" id="CHEBI:57540"/>
        <dbReference type="ChEBI" id="CHEBI:57945"/>
        <dbReference type="ChEBI" id="CHEBI:137820"/>
    </reaction>
    <physiologicalReaction direction="left-to-right" evidence="6">
        <dbReference type="Rhea" id="RHEA:53849"/>
    </physiologicalReaction>
</comment>
<comment type="catalytic activity">
    <reaction evidence="2">
        <text>glycocholate + NAD(+) = 7-oxo-glycodeoxycholate + NADH + H(+)</text>
        <dbReference type="Rhea" id="RHEA:53852"/>
        <dbReference type="ChEBI" id="CHEBI:15378"/>
        <dbReference type="ChEBI" id="CHEBI:29746"/>
        <dbReference type="ChEBI" id="CHEBI:57540"/>
        <dbReference type="ChEBI" id="CHEBI:57945"/>
        <dbReference type="ChEBI" id="CHEBI:137824"/>
    </reaction>
    <physiologicalReaction direction="left-to-right" evidence="6">
        <dbReference type="Rhea" id="RHEA:53853"/>
    </physiologicalReaction>
</comment>
<comment type="catalytic activity">
    <reaction evidence="3">
        <text>an aromatic primary alcohol + NAD(+) = an aromatic aldehyde + NADH + H(+)</text>
        <dbReference type="Rhea" id="RHEA:12076"/>
        <dbReference type="ChEBI" id="CHEBI:15378"/>
        <dbReference type="ChEBI" id="CHEBI:33855"/>
        <dbReference type="ChEBI" id="CHEBI:33857"/>
        <dbReference type="ChEBI" id="CHEBI:57540"/>
        <dbReference type="ChEBI" id="CHEBI:57945"/>
    </reaction>
</comment>
<comment type="catalytic activity">
    <reaction evidence="3">
        <text>benzyl alcohol + NAD(+) = benzaldehyde + NADH + H(+)</text>
        <dbReference type="Rhea" id="RHEA:64696"/>
        <dbReference type="ChEBI" id="CHEBI:15378"/>
        <dbReference type="ChEBI" id="CHEBI:17169"/>
        <dbReference type="ChEBI" id="CHEBI:17987"/>
        <dbReference type="ChEBI" id="CHEBI:57540"/>
        <dbReference type="ChEBI" id="CHEBI:57945"/>
    </reaction>
</comment>
<comment type="catalytic activity">
    <reaction evidence="3">
        <text>4-cyanobenzyl alcohol + NAD(+) = 4-cyanobenzaldehyde + NADH + H(+)</text>
        <dbReference type="Rhea" id="RHEA:65044"/>
        <dbReference type="ChEBI" id="CHEBI:15378"/>
        <dbReference type="ChEBI" id="CHEBI:57540"/>
        <dbReference type="ChEBI" id="CHEBI:57945"/>
        <dbReference type="ChEBI" id="CHEBI:156307"/>
        <dbReference type="ChEBI" id="CHEBI:156308"/>
    </reaction>
</comment>
<comment type="catalytic activity">
    <reaction evidence="3">
        <text>4-acetoxybenzyl alcohol + NAD(+) = 4-acetoxybenzaldehyde + NADH + H(+)</text>
        <dbReference type="Rhea" id="RHEA:65048"/>
        <dbReference type="ChEBI" id="CHEBI:15378"/>
        <dbReference type="ChEBI" id="CHEBI:57540"/>
        <dbReference type="ChEBI" id="CHEBI:57945"/>
        <dbReference type="ChEBI" id="CHEBI:86559"/>
        <dbReference type="ChEBI" id="CHEBI:156306"/>
    </reaction>
</comment>
<comment type="catalytic activity">
    <reaction evidence="3">
        <text>4-(trifluoromethyl)benzyl alcohol + NAD(+) = 4-(trifluoromethyl)benzaldehyde + NADH + H(+)</text>
        <dbReference type="Rhea" id="RHEA:65052"/>
        <dbReference type="ChEBI" id="CHEBI:15378"/>
        <dbReference type="ChEBI" id="CHEBI:57540"/>
        <dbReference type="ChEBI" id="CHEBI:57945"/>
        <dbReference type="ChEBI" id="CHEBI:156309"/>
        <dbReference type="ChEBI" id="CHEBI:156310"/>
    </reaction>
</comment>
<comment type="biophysicochemical properties">
    <kinetics>
        <KM evidence="2">0.177 mM for cholate (at pH 8.5)</KM>
        <KM evidence="2">0.024 mM for chenodeoxycholate (at pH 8.5)</KM>
        <KM evidence="2">0.231 mM for glycocholate (at pH 8.5)</KM>
        <KM evidence="2">0.054 mM for glycochenodeoxycholate (at pH 8.5)</KM>
        <KM evidence="2">0.119 mM for taurocholate (at pH 8.5)</KM>
        <KM evidence="2">0.024 mM for taurochenodeoxycholate (at pH 8.5)</KM>
        <KM evidence="2">0.524 mM for 3alpha,12alpha-dihydroxy-7-oxo-5beta-cholanate (at pH 6.5)</KM>
        <KM evidence="2">0.212 mM for NAD(+) (in the presence of cholate, at pH 8.5)</KM>
        <KM evidence="2">0.709 mM for NAD(+) (in the presence of chenodeoxycholate, at pH 8.5)</KM>
        <KM evidence="2">0.02 mM for NADH (in the presence of 3alpha,12alpha-dihydroxy-7-oxo-5beta-cholanate, at pH 8.5)</KM>
        <Vmax evidence="2">957.0 umol/min/mg enzyme for the oxidation of cholate (at pH 8.5)</Vmax>
        <Vmax evidence="2">906.0 umol/min/mg enzyme for the oxidation of chenodeoxycholate (at pH 8.5)</Vmax>
        <Vmax evidence="2">648.0 umol/min/mg enzyme for the oxidation of glycocholate (at pH 8.5)</Vmax>
        <Vmax evidence="2">1116.0 umol/min/mg enzyme for the oxidation of glycochenodeoxycholate (at pH 8.5)</Vmax>
        <Vmax evidence="2">798.0 umol/min/mg enzyme for the oxidation of taurocholate (at pH 8.5)</Vmax>
        <Vmax evidence="2">1050.0 umol/min/mg enzyme for the oxidation of taurochenodeoxycholate (at pH 8.5)</Vmax>
        <Vmax evidence="2">53.0 umol/min/mg enzyme for the reduction of 3alpha,12alpha-dihydroxy-7-oxo-5beta-cholanate (at pH 6.5)</Vmax>
    </kinetics>
    <phDependence>
        <text evidence="2">Optimum pH is pH 8.5 (NAD reduction, bile acid oxidation) and 6.5 (NADH oxidation, bile acid reduction).</text>
    </phDependence>
    <temperatureDependence>
        <text evidence="2">Is relatively thermostable, retaining 95% of initial activity after 1 hour at 65 degrees Celsius.</text>
    </temperatureDependence>
</comment>
<comment type="subunit">
    <text evidence="2">Homotetramer.</text>
</comment>
<comment type="induction">
    <text evidence="2">Up-regulated by cholate and after the transition of the cells from log phase to stationary growth phase.</text>
</comment>
<comment type="similarity">
    <text evidence="5">Belongs to the short-chain dehydrogenases/reductases (SDR) family.</text>
</comment>
<sequence>MNRFENKIIIITGAAGGIGASTTRRIVSEGGKVVIADYSREKADQFAAELSNSGADVRPVYFSATELKSCKELITFTMKEYGQIDVLVNNVGGTNPRRDTNIETLDMDYFDEAFHLNLSCTMYLSQLVIPIMSTQGGGNIVNVASISGITADSNGTLYGASKAGVINLTKYIATQTGKKNIRCNAVAPGLILTPAALNNLNEEVRKIFLGQCATPYLGEPQDVAATIAFLASEDARYITGQTIVVDGGLTIHNPTINLV</sequence>
<protein>
    <recommendedName>
        <fullName evidence="4">7alpha-hydroxysteroid dehydrogenase</fullName>
        <shortName evidence="4">7alpha-HSDH</shortName>
        <ecNumber evidence="2">1.1.1.159</ecNumber>
    </recommendedName>
    <alternativeName>
        <fullName evidence="7">Aromatic aldehyde reductase</fullName>
        <ecNumber evidence="3">1.1.1.-</ecNumber>
    </alternativeName>
    <alternativeName>
        <fullName evidence="4">NAD-dependent 7alpha-hydroxysteroid dehydrogenase</fullName>
    </alternativeName>
</protein>
<accession>Q5LA59</accession>
<keyword id="KW-0088">Bile acid catabolism</keyword>
<keyword id="KW-0903">Direct protein sequencing</keyword>
<keyword id="KW-0442">Lipid degradation</keyword>
<keyword id="KW-0443">Lipid metabolism</keyword>
<keyword id="KW-0520">NAD</keyword>
<keyword id="KW-0560">Oxidoreductase</keyword>
<keyword id="KW-0753">Steroid metabolism</keyword>
<evidence type="ECO:0000250" key="1">
    <source>
        <dbReference type="UniProtKB" id="P0AET8"/>
    </source>
</evidence>
<evidence type="ECO:0000269" key="2">
    <source>
    </source>
</evidence>
<evidence type="ECO:0000269" key="3">
    <source>
    </source>
</evidence>
<evidence type="ECO:0000303" key="4">
    <source>
    </source>
</evidence>
<evidence type="ECO:0000305" key="5"/>
<evidence type="ECO:0000305" key="6">
    <source>
    </source>
</evidence>
<evidence type="ECO:0000305" key="7">
    <source>
    </source>
</evidence>
<evidence type="ECO:0000312" key="8">
    <source>
        <dbReference type="EMBL" id="CAH09015.1"/>
    </source>
</evidence>
<gene>
    <name evidence="8" type="primary">hdhA</name>
    <name evidence="8" type="ordered locus">BF3320</name>
    <name evidence="8" type="ORF">BF9343_3234</name>
</gene>
<reference key="1">
    <citation type="journal article" date="2003" name="Curr. Microbiol.">
        <title>Cloning and characterization of the NAD-dependent 7alpha-Hydroxysteroid dehydrogenase from Bacteroides fragilis.</title>
        <authorList>
            <person name="Bennett M.J."/>
            <person name="McKnight S.L."/>
            <person name="Coleman J.P."/>
        </authorList>
    </citation>
    <scope>NUCLEOTIDE SEQUENCE [GENOMIC DNA]</scope>
    <scope>PROTEIN SEQUENCE OF 1-23</scope>
    <scope>FUNCTION</scope>
    <scope>CATALYTIC ACTIVITY</scope>
    <scope>BIOPHYSICOCHEMICAL PROPERTIES</scope>
    <scope>SUBSTRATE SPECIFICITY</scope>
    <scope>SUBUNIT</scope>
    <scope>INDUCTION</scope>
    <source>
        <strain>ATCC 25285 / DSM 2151 / CCUG 4856 / JCM 11019 / LMG 10263 / NCTC 9343 / Onslow / VPI 2553 / EN-2</strain>
    </source>
</reference>
<reference key="2">
    <citation type="journal article" date="2005" name="Science">
        <title>Extensive DNA inversions in the B. fragilis genome control variable gene expression.</title>
        <authorList>
            <person name="Cerdeno-Tarraga A.-M."/>
            <person name="Patrick S."/>
            <person name="Crossman L.C."/>
            <person name="Blakely G."/>
            <person name="Abratt V."/>
            <person name="Lennard N."/>
            <person name="Poxton I."/>
            <person name="Duerden B."/>
            <person name="Harris B."/>
            <person name="Quail M.A."/>
            <person name="Barron A."/>
            <person name="Clark L."/>
            <person name="Corton C."/>
            <person name="Doggett J."/>
            <person name="Holden M.T.G."/>
            <person name="Larke N."/>
            <person name="Line A."/>
            <person name="Lord A."/>
            <person name="Norbertczak H."/>
            <person name="Ormond D."/>
            <person name="Price C."/>
            <person name="Rabbinowitsch E."/>
            <person name="Woodward J."/>
            <person name="Barrell B.G."/>
            <person name="Parkhill J."/>
        </authorList>
    </citation>
    <scope>NUCLEOTIDE SEQUENCE [LARGE SCALE GENOMIC DNA]</scope>
    <source>
        <strain>ATCC 25285 / DSM 2151 / CCUG 4856 / JCM 11019 / LMG 10263 / NCTC 9343 / Onslow / VPI 2553 / EN-2</strain>
    </source>
</reference>
<reference key="3">
    <citation type="journal article" date="2011" name="Steroids">
        <title>The catalytic promiscuity of a microbial 7alpha-hydroxysteroid dehydrogenase. Reduction of non-steroidal carbonyl compounds.</title>
        <authorList>
            <person name="Liu Y."/>
            <person name="Lv T."/>
            <person name="Ren J."/>
            <person name="Wang M."/>
            <person name="Wu Q."/>
            <person name="Zhu D."/>
        </authorList>
    </citation>
    <scope>FUNCTION</scope>
    <scope>CATALYTIC ACTIVITY</scope>
</reference>
<proteinExistence type="evidence at protein level"/>
<dbReference type="EC" id="1.1.1.159" evidence="2"/>
<dbReference type="EC" id="1.1.1.-" evidence="3"/>
<dbReference type="EMBL" id="AF173833">
    <property type="protein sequence ID" value="AAD49430.2"/>
    <property type="molecule type" value="Genomic_DNA"/>
</dbReference>
<dbReference type="EMBL" id="CR626927">
    <property type="protein sequence ID" value="CAH09015.1"/>
    <property type="molecule type" value="Genomic_DNA"/>
</dbReference>
<dbReference type="RefSeq" id="WP_008657214.1">
    <property type="nucleotide sequence ID" value="NZ_UFTH01000001.1"/>
</dbReference>
<dbReference type="SMR" id="Q5LA59"/>
<dbReference type="SwissLipids" id="SLP:000001981"/>
<dbReference type="PaxDb" id="272559-BF9343_3234"/>
<dbReference type="GeneID" id="60367037"/>
<dbReference type="KEGG" id="bfs:BF9343_3234"/>
<dbReference type="eggNOG" id="COG1028">
    <property type="taxonomic scope" value="Bacteria"/>
</dbReference>
<dbReference type="HOGENOM" id="CLU_010194_1_0_10"/>
<dbReference type="BioCyc" id="BFRA272559:G1GHZ-3529-MONOMER"/>
<dbReference type="SABIO-RK" id="Q5LA59"/>
<dbReference type="Proteomes" id="UP000006731">
    <property type="component" value="Chromosome"/>
</dbReference>
<dbReference type="GO" id="GO:0008709">
    <property type="term" value="F:cholate 7-alpha-dehydrogenase (NAD+) activity"/>
    <property type="evidence" value="ECO:0007669"/>
    <property type="project" value="UniProtKB-EC"/>
</dbReference>
<dbReference type="GO" id="GO:0030573">
    <property type="term" value="P:bile acid catabolic process"/>
    <property type="evidence" value="ECO:0007669"/>
    <property type="project" value="UniProtKB-KW"/>
</dbReference>
<dbReference type="GO" id="GO:0016042">
    <property type="term" value="P:lipid catabolic process"/>
    <property type="evidence" value="ECO:0007669"/>
    <property type="project" value="UniProtKB-KW"/>
</dbReference>
<dbReference type="CDD" id="cd05233">
    <property type="entry name" value="SDR_c"/>
    <property type="match status" value="1"/>
</dbReference>
<dbReference type="FunFam" id="3.40.50.720:FF:000084">
    <property type="entry name" value="Short-chain dehydrogenase reductase"/>
    <property type="match status" value="1"/>
</dbReference>
<dbReference type="Gene3D" id="3.40.50.720">
    <property type="entry name" value="NAD(P)-binding Rossmann-like Domain"/>
    <property type="match status" value="1"/>
</dbReference>
<dbReference type="InterPro" id="IPR036291">
    <property type="entry name" value="NAD(P)-bd_dom_sf"/>
</dbReference>
<dbReference type="InterPro" id="IPR002347">
    <property type="entry name" value="SDR_fam"/>
</dbReference>
<dbReference type="NCBIfam" id="NF005559">
    <property type="entry name" value="PRK07231.1"/>
    <property type="match status" value="1"/>
</dbReference>
<dbReference type="PANTHER" id="PTHR24321">
    <property type="entry name" value="DEHYDROGENASES, SHORT CHAIN"/>
    <property type="match status" value="1"/>
</dbReference>
<dbReference type="PANTHER" id="PTHR24321:SF8">
    <property type="entry name" value="ESTRADIOL 17-BETA-DEHYDROGENASE 8-RELATED"/>
    <property type="match status" value="1"/>
</dbReference>
<dbReference type="Pfam" id="PF13561">
    <property type="entry name" value="adh_short_C2"/>
    <property type="match status" value="1"/>
</dbReference>
<dbReference type="PRINTS" id="PR00081">
    <property type="entry name" value="GDHRDH"/>
</dbReference>
<dbReference type="PRINTS" id="PR00080">
    <property type="entry name" value="SDRFAMILY"/>
</dbReference>
<dbReference type="SUPFAM" id="SSF51735">
    <property type="entry name" value="NAD(P)-binding Rossmann-fold domains"/>
    <property type="match status" value="1"/>
</dbReference>
<organism>
    <name type="scientific">Bacteroides fragilis (strain ATCC 25285 / DSM 2151 / CCUG 4856 / JCM 11019 / LMG 10263 / NCTC 9343 / Onslow / VPI 2553 / EN-2)</name>
    <dbReference type="NCBI Taxonomy" id="272559"/>
    <lineage>
        <taxon>Bacteria</taxon>
        <taxon>Pseudomonadati</taxon>
        <taxon>Bacteroidota</taxon>
        <taxon>Bacteroidia</taxon>
        <taxon>Bacteroidales</taxon>
        <taxon>Bacteroidaceae</taxon>
        <taxon>Bacteroides</taxon>
    </lineage>
</organism>
<feature type="chain" id="PRO_0000451448" description="7alpha-hydroxysteroid dehydrogenase">
    <location>
        <begin position="1"/>
        <end position="259"/>
    </location>
</feature>
<feature type="active site" description="Proton acceptor" evidence="1">
    <location>
        <position position="158"/>
    </location>
</feature>
<feature type="binding site" evidence="1">
    <location>
        <position position="18"/>
    </location>
    <ligand>
        <name>NAD(+)</name>
        <dbReference type="ChEBI" id="CHEBI:57540"/>
    </ligand>
</feature>
<feature type="binding site" evidence="1">
    <location>
        <begin position="37"/>
        <end position="38"/>
    </location>
    <ligand>
        <name>NAD(+)</name>
        <dbReference type="ChEBI" id="CHEBI:57540"/>
    </ligand>
</feature>
<feature type="binding site" evidence="1">
    <location>
        <position position="90"/>
    </location>
    <ligand>
        <name>NAD(+)</name>
        <dbReference type="ChEBI" id="CHEBI:57540"/>
    </ligand>
</feature>
<feature type="binding site" evidence="1">
    <location>
        <position position="145"/>
    </location>
    <ligand>
        <name>glycochenodeoxycholate</name>
        <dbReference type="ChEBI" id="CHEBI:36252"/>
    </ligand>
</feature>
<feature type="binding site" evidence="1">
    <location>
        <position position="158"/>
    </location>
    <ligand>
        <name>glycochenodeoxycholate</name>
        <dbReference type="ChEBI" id="CHEBI:36252"/>
    </ligand>
</feature>
<feature type="binding site" evidence="1">
    <location>
        <position position="158"/>
    </location>
    <ligand>
        <name>NAD(+)</name>
        <dbReference type="ChEBI" id="CHEBI:57540"/>
    </ligand>
</feature>
<feature type="binding site" evidence="1">
    <location>
        <position position="162"/>
    </location>
    <ligand>
        <name>NAD(+)</name>
        <dbReference type="ChEBI" id="CHEBI:57540"/>
    </ligand>
</feature>
<feature type="binding site" evidence="1">
    <location>
        <begin position="191"/>
        <end position="193"/>
    </location>
    <ligand>
        <name>NAD(+)</name>
        <dbReference type="ChEBI" id="CHEBI:57540"/>
    </ligand>
</feature>
<feature type="site" description="Transition state stabilizer" evidence="1">
    <location>
        <position position="145"/>
    </location>
</feature>
<feature type="site" description="Lowers pKa of active site Tyr" evidence="1">
    <location>
        <position position="162"/>
    </location>
</feature>